<gene>
    <name type="ordered locus">YHR054C</name>
</gene>
<comment type="similarity">
    <text evidence="1">To yeast YHR056c.</text>
</comment>
<protein>
    <recommendedName>
        <fullName>Uncharacterized protein YHR054C</fullName>
    </recommendedName>
</protein>
<sequence length="354" mass="41061">MVPAAENLSPIPASIDTNDIPLIANDLKLLETQAKLINILQGVPFYLPVNLTKIESLLETLTMGVSNTVDLYFHDNEVRKEWKDTLNFINTIVYTNFFLFVQNESSLSMAVQHSSNNNKTSNSERCAKDLMKIISNMHIFYSITFNFIFPIKSIKSFSSGNNRFHSNGKEFLFANHFIEILQNFIAITFAIFQRCEVILYDEFYKNLSNEEINVQLLLIHDKILEILKKIEIIVSFLRDEMNSNGSFKSIKGFNKVLNLIKYMLRFSKKKQNFARNSDNNNVTDYSQSAKNKNVLLKFPVSELNRIYLKFKEISDFLMEREVVQRSIIIDKDLESDNLGITTANFNDFYDAFYN</sequence>
<feature type="chain" id="PRO_0000202896" description="Uncharacterized protein YHR054C">
    <location>
        <begin position="1"/>
        <end position="354"/>
    </location>
</feature>
<proteinExistence type="predicted"/>
<reference key="1">
    <citation type="journal article" date="1994" name="Science">
        <title>Complete nucleotide sequence of Saccharomyces cerevisiae chromosome VIII.</title>
        <authorList>
            <person name="Johnston M."/>
            <person name="Andrews S."/>
            <person name="Brinkman R."/>
            <person name="Cooper J."/>
            <person name="Ding H."/>
            <person name="Dover J."/>
            <person name="Du Z."/>
            <person name="Favello A."/>
            <person name="Fulton L."/>
            <person name="Gattung S."/>
            <person name="Geisel C."/>
            <person name="Kirsten J."/>
            <person name="Kucaba T."/>
            <person name="Hillier L.W."/>
            <person name="Jier M."/>
            <person name="Johnston L."/>
            <person name="Langston Y."/>
            <person name="Latreille P."/>
            <person name="Louis E.J."/>
            <person name="Macri C."/>
            <person name="Mardis E."/>
            <person name="Menezes S."/>
            <person name="Mouser L."/>
            <person name="Nhan M."/>
            <person name="Rifkin L."/>
            <person name="Riles L."/>
            <person name="St Peter H."/>
            <person name="Trevaskis E."/>
            <person name="Vaughan K."/>
            <person name="Vignati D."/>
            <person name="Wilcox L."/>
            <person name="Wohldman P."/>
            <person name="Waterston R."/>
            <person name="Wilson R."/>
            <person name="Vaudin M."/>
        </authorList>
    </citation>
    <scope>NUCLEOTIDE SEQUENCE [LARGE SCALE GENOMIC DNA]</scope>
    <source>
        <strain>ATCC 204508 / S288c</strain>
    </source>
</reference>
<reference key="2">
    <citation type="journal article" date="2014" name="G3 (Bethesda)">
        <title>The reference genome sequence of Saccharomyces cerevisiae: Then and now.</title>
        <authorList>
            <person name="Engel S.R."/>
            <person name="Dietrich F.S."/>
            <person name="Fisk D.G."/>
            <person name="Binkley G."/>
            <person name="Balakrishnan R."/>
            <person name="Costanzo M.C."/>
            <person name="Dwight S.S."/>
            <person name="Hitz B.C."/>
            <person name="Karra K."/>
            <person name="Nash R.S."/>
            <person name="Weng S."/>
            <person name="Wong E.D."/>
            <person name="Lloyd P."/>
            <person name="Skrzypek M.S."/>
            <person name="Miyasato S.R."/>
            <person name="Simison M."/>
            <person name="Cherry J.M."/>
        </authorList>
    </citation>
    <scope>GENOME REANNOTATION</scope>
    <source>
        <strain>ATCC 204508 / S288c</strain>
    </source>
</reference>
<reference key="3">
    <citation type="journal article" date="2007" name="Genome Res.">
        <title>Approaching a complete repository of sequence-verified protein-encoding clones for Saccharomyces cerevisiae.</title>
        <authorList>
            <person name="Hu Y."/>
            <person name="Rolfs A."/>
            <person name="Bhullar B."/>
            <person name="Murthy T.V.S."/>
            <person name="Zhu C."/>
            <person name="Berger M.F."/>
            <person name="Camargo A.A."/>
            <person name="Kelley F."/>
            <person name="McCarron S."/>
            <person name="Jepson D."/>
            <person name="Richardson A."/>
            <person name="Raphael J."/>
            <person name="Moreira D."/>
            <person name="Taycher E."/>
            <person name="Zuo D."/>
            <person name="Mohr S."/>
            <person name="Kane M.F."/>
            <person name="Williamson J."/>
            <person name="Simpson A.J.G."/>
            <person name="Bulyk M.L."/>
            <person name="Harlow E."/>
            <person name="Marsischky G."/>
            <person name="Kolodner R.D."/>
            <person name="LaBaer J."/>
        </authorList>
    </citation>
    <scope>NUCLEOTIDE SEQUENCE [GENOMIC DNA]</scope>
    <source>
        <strain>ATCC 204508 / S288c</strain>
    </source>
</reference>
<name>YHL4_YEAST</name>
<organism>
    <name type="scientific">Saccharomyces cerevisiae (strain ATCC 204508 / S288c)</name>
    <name type="common">Baker's yeast</name>
    <dbReference type="NCBI Taxonomy" id="559292"/>
    <lineage>
        <taxon>Eukaryota</taxon>
        <taxon>Fungi</taxon>
        <taxon>Dikarya</taxon>
        <taxon>Ascomycota</taxon>
        <taxon>Saccharomycotina</taxon>
        <taxon>Saccharomycetes</taxon>
        <taxon>Saccharomycetales</taxon>
        <taxon>Saccharomycetaceae</taxon>
        <taxon>Saccharomyces</taxon>
    </lineage>
</organism>
<evidence type="ECO:0000305" key="1"/>
<accession>P38780</accession>
<accession>D3DL03</accession>
<dbReference type="EMBL" id="U00061">
    <property type="protein sequence ID" value="AAB68383.1"/>
    <property type="molecule type" value="Genomic_DNA"/>
</dbReference>
<dbReference type="EMBL" id="AY557883">
    <property type="protein sequence ID" value="AAS56209.1"/>
    <property type="molecule type" value="Genomic_DNA"/>
</dbReference>
<dbReference type="EMBL" id="BK006934">
    <property type="protein sequence ID" value="DAA06747.1"/>
    <property type="molecule type" value="Genomic_DNA"/>
</dbReference>
<dbReference type="PIR" id="S46706">
    <property type="entry name" value="S46706"/>
</dbReference>
<dbReference type="RefSeq" id="NP_011921.1">
    <property type="nucleotide sequence ID" value="NM_001179184.1"/>
</dbReference>
<dbReference type="BioGRID" id="36486">
    <property type="interactions" value="17"/>
</dbReference>
<dbReference type="FunCoup" id="P38780">
    <property type="interactions" value="103"/>
</dbReference>
<dbReference type="IntAct" id="P38780">
    <property type="interactions" value="1"/>
</dbReference>
<dbReference type="MINT" id="P38780"/>
<dbReference type="STRING" id="4932.YHR054C"/>
<dbReference type="iPTMnet" id="P38780"/>
<dbReference type="PaxDb" id="4932-YHR054C"/>
<dbReference type="PeptideAtlas" id="P38780"/>
<dbReference type="EnsemblFungi" id="YHR054C_mRNA">
    <property type="protein sequence ID" value="YHR054C"/>
    <property type="gene ID" value="YHR054C"/>
</dbReference>
<dbReference type="GeneID" id="856451"/>
<dbReference type="KEGG" id="sce:YHR054C"/>
<dbReference type="AGR" id="SGD:S000001096"/>
<dbReference type="SGD" id="S000001096">
    <property type="gene designation" value="YHR054C"/>
</dbReference>
<dbReference type="VEuPathDB" id="FungiDB:YHR054C"/>
<dbReference type="HOGENOM" id="CLU_783492_0_0_1"/>
<dbReference type="InParanoid" id="P38780"/>
<dbReference type="OrthoDB" id="2943660at2759"/>
<dbReference type="BioCyc" id="YEAST:G3O-31108-MONOMER"/>
<dbReference type="PRO" id="PR:P38780"/>
<dbReference type="Proteomes" id="UP000002311">
    <property type="component" value="Chromosome VIII"/>
</dbReference>
<dbReference type="RNAct" id="P38780">
    <property type="molecule type" value="protein"/>
</dbReference>
<keyword id="KW-1185">Reference proteome</keyword>